<gene>
    <name evidence="1" type="primary">hisF</name>
    <name type="ordered locus">ABBFA_000269</name>
</gene>
<name>HIS6_ACIB3</name>
<reference key="1">
    <citation type="journal article" date="2008" name="J. Bacteriol.">
        <title>Comparative genome sequence analysis of multidrug-resistant Acinetobacter baumannii.</title>
        <authorList>
            <person name="Adams M.D."/>
            <person name="Goglin K."/>
            <person name="Molyneaux N."/>
            <person name="Hujer K.M."/>
            <person name="Lavender H."/>
            <person name="Jamison J.J."/>
            <person name="MacDonald I.J."/>
            <person name="Martin K.M."/>
            <person name="Russo T."/>
            <person name="Campagnari A.A."/>
            <person name="Hujer A.M."/>
            <person name="Bonomo R.A."/>
            <person name="Gill S.R."/>
        </authorList>
    </citation>
    <scope>NUCLEOTIDE SEQUENCE [LARGE SCALE GENOMIC DNA]</scope>
    <source>
        <strain>AB307-0294</strain>
    </source>
</reference>
<feature type="chain" id="PRO_1000134952" description="Imidazole glycerol phosphate synthase subunit HisF">
    <location>
        <begin position="1"/>
        <end position="252"/>
    </location>
</feature>
<feature type="active site" evidence="1">
    <location>
        <position position="11"/>
    </location>
</feature>
<feature type="active site" evidence="1">
    <location>
        <position position="130"/>
    </location>
</feature>
<evidence type="ECO:0000255" key="1">
    <source>
        <dbReference type="HAMAP-Rule" id="MF_01013"/>
    </source>
</evidence>
<accession>B7GVJ5</accession>
<comment type="function">
    <text evidence="1">IGPS catalyzes the conversion of PRFAR and glutamine to IGP, AICAR and glutamate. The HisF subunit catalyzes the cyclization activity that produces IGP and AICAR from PRFAR using the ammonia provided by the HisH subunit.</text>
</comment>
<comment type="catalytic activity">
    <reaction evidence="1">
        <text>5-[(5-phospho-1-deoxy-D-ribulos-1-ylimino)methylamino]-1-(5-phospho-beta-D-ribosyl)imidazole-4-carboxamide + L-glutamine = D-erythro-1-(imidazol-4-yl)glycerol 3-phosphate + 5-amino-1-(5-phospho-beta-D-ribosyl)imidazole-4-carboxamide + L-glutamate + H(+)</text>
        <dbReference type="Rhea" id="RHEA:24793"/>
        <dbReference type="ChEBI" id="CHEBI:15378"/>
        <dbReference type="ChEBI" id="CHEBI:29985"/>
        <dbReference type="ChEBI" id="CHEBI:58278"/>
        <dbReference type="ChEBI" id="CHEBI:58359"/>
        <dbReference type="ChEBI" id="CHEBI:58475"/>
        <dbReference type="ChEBI" id="CHEBI:58525"/>
        <dbReference type="EC" id="4.3.2.10"/>
    </reaction>
</comment>
<comment type="pathway">
    <text evidence="1">Amino-acid biosynthesis; L-histidine biosynthesis; L-histidine from 5-phospho-alpha-D-ribose 1-diphosphate: step 5/9.</text>
</comment>
<comment type="subunit">
    <text evidence="1">Heterodimer of HisH and HisF.</text>
</comment>
<comment type="subcellular location">
    <subcellularLocation>
        <location evidence="1">Cytoplasm</location>
    </subcellularLocation>
</comment>
<comment type="similarity">
    <text evidence="1">Belongs to the HisA/HisF family.</text>
</comment>
<proteinExistence type="inferred from homology"/>
<protein>
    <recommendedName>
        <fullName evidence="1">Imidazole glycerol phosphate synthase subunit HisF</fullName>
        <ecNumber evidence="1">4.3.2.10</ecNumber>
    </recommendedName>
    <alternativeName>
        <fullName evidence="1">IGP synthase cyclase subunit</fullName>
    </alternativeName>
    <alternativeName>
        <fullName evidence="1">IGP synthase subunit HisF</fullName>
    </alternativeName>
    <alternativeName>
        <fullName evidence="1">ImGP synthase subunit HisF</fullName>
        <shortName evidence="1">IGPS subunit HisF</shortName>
    </alternativeName>
</protein>
<dbReference type="EC" id="4.3.2.10" evidence="1"/>
<dbReference type="EMBL" id="CP001172">
    <property type="protein sequence ID" value="ACJ56830.1"/>
    <property type="molecule type" value="Genomic_DNA"/>
</dbReference>
<dbReference type="RefSeq" id="WP_000880078.1">
    <property type="nucleotide sequence ID" value="NZ_CP001172.1"/>
</dbReference>
<dbReference type="SMR" id="B7GVJ5"/>
<dbReference type="GeneID" id="92895482"/>
<dbReference type="HOGENOM" id="CLU_048577_4_0_6"/>
<dbReference type="UniPathway" id="UPA00031">
    <property type="reaction ID" value="UER00010"/>
</dbReference>
<dbReference type="Proteomes" id="UP000006924">
    <property type="component" value="Chromosome"/>
</dbReference>
<dbReference type="GO" id="GO:0005737">
    <property type="term" value="C:cytoplasm"/>
    <property type="evidence" value="ECO:0007669"/>
    <property type="project" value="UniProtKB-SubCell"/>
</dbReference>
<dbReference type="GO" id="GO:0000107">
    <property type="term" value="F:imidazoleglycerol-phosphate synthase activity"/>
    <property type="evidence" value="ECO:0007669"/>
    <property type="project" value="UniProtKB-UniRule"/>
</dbReference>
<dbReference type="GO" id="GO:0016829">
    <property type="term" value="F:lyase activity"/>
    <property type="evidence" value="ECO:0007669"/>
    <property type="project" value="UniProtKB-KW"/>
</dbReference>
<dbReference type="GO" id="GO:0000105">
    <property type="term" value="P:L-histidine biosynthetic process"/>
    <property type="evidence" value="ECO:0007669"/>
    <property type="project" value="UniProtKB-UniRule"/>
</dbReference>
<dbReference type="CDD" id="cd04731">
    <property type="entry name" value="HisF"/>
    <property type="match status" value="1"/>
</dbReference>
<dbReference type="FunFam" id="3.20.20.70:FF:000006">
    <property type="entry name" value="Imidazole glycerol phosphate synthase subunit HisF"/>
    <property type="match status" value="1"/>
</dbReference>
<dbReference type="Gene3D" id="3.20.20.70">
    <property type="entry name" value="Aldolase class I"/>
    <property type="match status" value="1"/>
</dbReference>
<dbReference type="HAMAP" id="MF_01013">
    <property type="entry name" value="HisF"/>
    <property type="match status" value="1"/>
</dbReference>
<dbReference type="InterPro" id="IPR013785">
    <property type="entry name" value="Aldolase_TIM"/>
</dbReference>
<dbReference type="InterPro" id="IPR006062">
    <property type="entry name" value="His_biosynth"/>
</dbReference>
<dbReference type="InterPro" id="IPR004651">
    <property type="entry name" value="HisF"/>
</dbReference>
<dbReference type="InterPro" id="IPR050064">
    <property type="entry name" value="IGPS_HisA/HisF"/>
</dbReference>
<dbReference type="InterPro" id="IPR011060">
    <property type="entry name" value="RibuloseP-bd_barrel"/>
</dbReference>
<dbReference type="NCBIfam" id="TIGR00735">
    <property type="entry name" value="hisF"/>
    <property type="match status" value="1"/>
</dbReference>
<dbReference type="PANTHER" id="PTHR21235:SF2">
    <property type="entry name" value="IMIDAZOLE GLYCEROL PHOSPHATE SYNTHASE HISHF"/>
    <property type="match status" value="1"/>
</dbReference>
<dbReference type="PANTHER" id="PTHR21235">
    <property type="entry name" value="IMIDAZOLE GLYCEROL PHOSPHATE SYNTHASE SUBUNIT HISF/H IGP SYNTHASE SUBUNIT HISF/H"/>
    <property type="match status" value="1"/>
</dbReference>
<dbReference type="Pfam" id="PF00977">
    <property type="entry name" value="His_biosynth"/>
    <property type="match status" value="1"/>
</dbReference>
<dbReference type="SUPFAM" id="SSF51366">
    <property type="entry name" value="Ribulose-phoshate binding barrel"/>
    <property type="match status" value="1"/>
</dbReference>
<sequence>MLAKRIIPCLDVDNGRVVKGVQFLDIRDAGDPVEVARRYNEQGADEITFLDITATHHGRDTTYRTVERMAETVFVPLTVGGGVRKVEDIRALLNAGADKVSINSAAVFNPEFVQEASQHFGAQCIVVAIDAKKTGDNKWEIFTHGGRKPTGIDAIEWAVKMADYGAGELLITSMDADGTKAGYDIALMRAINDRVTIPTIASGGVGNLQHLADGILQGGADAVLAASIFHFGQYTIPEAKQYLAEQGIEMRL</sequence>
<keyword id="KW-0028">Amino-acid biosynthesis</keyword>
<keyword id="KW-0963">Cytoplasm</keyword>
<keyword id="KW-0368">Histidine biosynthesis</keyword>
<keyword id="KW-0456">Lyase</keyword>
<organism>
    <name type="scientific">Acinetobacter baumannii (strain AB307-0294)</name>
    <dbReference type="NCBI Taxonomy" id="557600"/>
    <lineage>
        <taxon>Bacteria</taxon>
        <taxon>Pseudomonadati</taxon>
        <taxon>Pseudomonadota</taxon>
        <taxon>Gammaproteobacteria</taxon>
        <taxon>Moraxellales</taxon>
        <taxon>Moraxellaceae</taxon>
        <taxon>Acinetobacter</taxon>
        <taxon>Acinetobacter calcoaceticus/baumannii complex</taxon>
    </lineage>
</organism>